<evidence type="ECO:0000255" key="1">
    <source>
        <dbReference type="HAMAP-Rule" id="MF_01595"/>
    </source>
</evidence>
<evidence type="ECO:0000256" key="2">
    <source>
        <dbReference type="SAM" id="MobiDB-lite"/>
    </source>
</evidence>
<keyword id="KW-0963">Cytoplasm</keyword>
<keyword id="KW-0460">Magnesium</keyword>
<keyword id="KW-0479">Metal-binding</keyword>
<keyword id="KW-0548">Nucleotidyltransferase</keyword>
<keyword id="KW-1185">Reference proteome</keyword>
<keyword id="KW-0694">RNA-binding</keyword>
<keyword id="KW-0808">Transferase</keyword>
<name>PNP_EXIS2</name>
<sequence>MSQTKQTFSTELGGRPLTIEIGQLAKQANGAALIRYGETAVLATVVASKQPKDLDFFPLTVNYEEKLYAAGKIPGGFLKREGRPGENAILTSRLIDRPIRPLFPDGFRHDIQVATTVLSSDEDNSPEVAAMIGASIALSISDIPFDGPIAGVTIGRVNGEFIINPTMSQASESDIDLQVAGTKHAVNMVEAGAKEVSEQAMLEAILLGHDVIKELIAFQEEIVAAVGQEKFAYTVASFDETLVNRLKAEALAEVTTAVQVEEKQARDLAINEVISKYIDQYAADDSITEAQLAEVSGVLNKFVKTEVRRLITEDKVRPDGRGLAEIRPLDSEIGLLPRAHGSGLFTRGQTQVLSVATLGVAGDAQIIDGLGLKAEKRFMHHYNFPPFSVGEARPMRAPGRREIGHGALGERALLPVLPSETDFPYTIRLVSEVLESNGSSSQASICGSILAMMDAGVPLKAPVAGIAMGLIKEGENYSILTDIQGMEDHLGDMDFKVAGTKDGVTALQMDMKIGGITRQILEEALEQARLGRLHILEHMNSVIAEPRVELSKYAPKIVTLKINPDKIRDVIGPGGKVINGIIDETGVKIDIDQDGTVFIASTDQDGINHARQLIEDIVREVVIGEEFDGTVRRVEKFGAFVELFKGKDALVHISELALERVGQTEDVVKLGDKLKVRVTEVDDKGRVNASHKVLLVEGMSPEDRAAYDEKKKTERDSRPPRRDTGSRPPRDGQRPPRRN</sequence>
<gene>
    <name evidence="1" type="primary">pnp</name>
    <name type="ordered locus">Exig_1832</name>
</gene>
<protein>
    <recommendedName>
        <fullName evidence="1">Polyribonucleotide nucleotidyltransferase</fullName>
        <ecNumber evidence="1">2.7.7.8</ecNumber>
    </recommendedName>
    <alternativeName>
        <fullName evidence="1">Polynucleotide phosphorylase</fullName>
        <shortName evidence="1">PNPase</shortName>
    </alternativeName>
</protein>
<comment type="function">
    <text evidence="1">Involved in mRNA degradation. Catalyzes the phosphorolysis of single-stranded polyribonucleotides processively in the 3'- to 5'-direction.</text>
</comment>
<comment type="catalytic activity">
    <reaction evidence="1">
        <text>RNA(n+1) + phosphate = RNA(n) + a ribonucleoside 5'-diphosphate</text>
        <dbReference type="Rhea" id="RHEA:22096"/>
        <dbReference type="Rhea" id="RHEA-COMP:14527"/>
        <dbReference type="Rhea" id="RHEA-COMP:17342"/>
        <dbReference type="ChEBI" id="CHEBI:43474"/>
        <dbReference type="ChEBI" id="CHEBI:57930"/>
        <dbReference type="ChEBI" id="CHEBI:140395"/>
        <dbReference type="EC" id="2.7.7.8"/>
    </reaction>
</comment>
<comment type="cofactor">
    <cofactor evidence="1">
        <name>Mg(2+)</name>
        <dbReference type="ChEBI" id="CHEBI:18420"/>
    </cofactor>
</comment>
<comment type="subcellular location">
    <subcellularLocation>
        <location evidence="1">Cytoplasm</location>
    </subcellularLocation>
</comment>
<comment type="similarity">
    <text evidence="1">Belongs to the polyribonucleotide nucleotidyltransferase family.</text>
</comment>
<accession>B1YI57</accession>
<reference key="1">
    <citation type="submission" date="2008-04" db="EMBL/GenBank/DDBJ databases">
        <title>Complete sequence of chromosome of Exiguobacterium sibiricum 255-15.</title>
        <authorList>
            <consortium name="US DOE Joint Genome Institute"/>
            <person name="Copeland A."/>
            <person name="Lucas S."/>
            <person name="Lapidus A."/>
            <person name="Glavina del Rio T."/>
            <person name="Dalin E."/>
            <person name="Tice H."/>
            <person name="Bruce D."/>
            <person name="Goodwin L."/>
            <person name="Pitluck S."/>
            <person name="Kiss H."/>
            <person name="Chertkov O."/>
            <person name="Monk C."/>
            <person name="Brettin T."/>
            <person name="Detter J.C."/>
            <person name="Han C."/>
            <person name="Kuske C.R."/>
            <person name="Schmutz J."/>
            <person name="Larimer F."/>
            <person name="Land M."/>
            <person name="Hauser L."/>
            <person name="Kyrpides N."/>
            <person name="Mikhailova N."/>
            <person name="Vishnivetskaya T."/>
            <person name="Rodrigues D.F."/>
            <person name="Gilichinsky D."/>
            <person name="Tiedje J."/>
            <person name="Richardson P."/>
        </authorList>
    </citation>
    <scope>NUCLEOTIDE SEQUENCE [LARGE SCALE GENOMIC DNA]</scope>
    <source>
        <strain>DSM 17290 / CCUG 55495 / CIP 109462 / JCM 13490 / 255-15</strain>
    </source>
</reference>
<proteinExistence type="inferred from homology"/>
<feature type="chain" id="PRO_1000147920" description="Polyribonucleotide nucleotidyltransferase">
    <location>
        <begin position="1"/>
        <end position="739"/>
    </location>
</feature>
<feature type="domain" description="KH" evidence="1">
    <location>
        <begin position="555"/>
        <end position="614"/>
    </location>
</feature>
<feature type="domain" description="S1 motif" evidence="1">
    <location>
        <begin position="624"/>
        <end position="692"/>
    </location>
</feature>
<feature type="region of interest" description="Disordered" evidence="2">
    <location>
        <begin position="698"/>
        <end position="739"/>
    </location>
</feature>
<feature type="compositionally biased region" description="Basic and acidic residues" evidence="2">
    <location>
        <begin position="701"/>
        <end position="739"/>
    </location>
</feature>
<feature type="binding site" evidence="1">
    <location>
        <position position="488"/>
    </location>
    <ligand>
        <name>Mg(2+)</name>
        <dbReference type="ChEBI" id="CHEBI:18420"/>
    </ligand>
</feature>
<feature type="binding site" evidence="1">
    <location>
        <position position="494"/>
    </location>
    <ligand>
        <name>Mg(2+)</name>
        <dbReference type="ChEBI" id="CHEBI:18420"/>
    </ligand>
</feature>
<organism>
    <name type="scientific">Exiguobacterium sibiricum (strain DSM 17290 / CCUG 55495 / CIP 109462 / JCM 13490 / 255-15)</name>
    <dbReference type="NCBI Taxonomy" id="262543"/>
    <lineage>
        <taxon>Bacteria</taxon>
        <taxon>Bacillati</taxon>
        <taxon>Bacillota</taxon>
        <taxon>Bacilli</taxon>
        <taxon>Bacillales</taxon>
        <taxon>Bacillales Family XII. Incertae Sedis</taxon>
        <taxon>Exiguobacterium</taxon>
    </lineage>
</organism>
<dbReference type="EC" id="2.7.7.8" evidence="1"/>
<dbReference type="EMBL" id="CP001022">
    <property type="protein sequence ID" value="ACB61284.1"/>
    <property type="molecule type" value="Genomic_DNA"/>
</dbReference>
<dbReference type="RefSeq" id="WP_012370702.1">
    <property type="nucleotide sequence ID" value="NC_010556.1"/>
</dbReference>
<dbReference type="SMR" id="B1YI57"/>
<dbReference type="STRING" id="262543.Exig_1832"/>
<dbReference type="KEGG" id="esi:Exig_1832"/>
<dbReference type="eggNOG" id="COG1185">
    <property type="taxonomic scope" value="Bacteria"/>
</dbReference>
<dbReference type="HOGENOM" id="CLU_004217_2_2_9"/>
<dbReference type="OrthoDB" id="9804305at2"/>
<dbReference type="Proteomes" id="UP000001681">
    <property type="component" value="Chromosome"/>
</dbReference>
<dbReference type="GO" id="GO:0005829">
    <property type="term" value="C:cytosol"/>
    <property type="evidence" value="ECO:0007669"/>
    <property type="project" value="TreeGrafter"/>
</dbReference>
<dbReference type="GO" id="GO:0000175">
    <property type="term" value="F:3'-5'-RNA exonuclease activity"/>
    <property type="evidence" value="ECO:0007669"/>
    <property type="project" value="TreeGrafter"/>
</dbReference>
<dbReference type="GO" id="GO:0000287">
    <property type="term" value="F:magnesium ion binding"/>
    <property type="evidence" value="ECO:0007669"/>
    <property type="project" value="UniProtKB-UniRule"/>
</dbReference>
<dbReference type="GO" id="GO:0004654">
    <property type="term" value="F:polyribonucleotide nucleotidyltransferase activity"/>
    <property type="evidence" value="ECO:0007669"/>
    <property type="project" value="UniProtKB-UniRule"/>
</dbReference>
<dbReference type="GO" id="GO:0003723">
    <property type="term" value="F:RNA binding"/>
    <property type="evidence" value="ECO:0007669"/>
    <property type="project" value="UniProtKB-UniRule"/>
</dbReference>
<dbReference type="GO" id="GO:0006402">
    <property type="term" value="P:mRNA catabolic process"/>
    <property type="evidence" value="ECO:0007669"/>
    <property type="project" value="UniProtKB-UniRule"/>
</dbReference>
<dbReference type="GO" id="GO:0006396">
    <property type="term" value="P:RNA processing"/>
    <property type="evidence" value="ECO:0007669"/>
    <property type="project" value="InterPro"/>
</dbReference>
<dbReference type="CDD" id="cd02393">
    <property type="entry name" value="KH-I_PNPase"/>
    <property type="match status" value="1"/>
</dbReference>
<dbReference type="CDD" id="cd11363">
    <property type="entry name" value="RNase_PH_PNPase_1"/>
    <property type="match status" value="1"/>
</dbReference>
<dbReference type="CDD" id="cd11364">
    <property type="entry name" value="RNase_PH_PNPase_2"/>
    <property type="match status" value="1"/>
</dbReference>
<dbReference type="FunFam" id="3.30.1370.10:FF:000001">
    <property type="entry name" value="Polyribonucleotide nucleotidyltransferase"/>
    <property type="match status" value="1"/>
</dbReference>
<dbReference type="FunFam" id="3.30.230.70:FF:000001">
    <property type="entry name" value="Polyribonucleotide nucleotidyltransferase"/>
    <property type="match status" value="1"/>
</dbReference>
<dbReference type="FunFam" id="3.30.230.70:FF:000002">
    <property type="entry name" value="Polyribonucleotide nucleotidyltransferase"/>
    <property type="match status" value="1"/>
</dbReference>
<dbReference type="Gene3D" id="3.30.230.70">
    <property type="entry name" value="GHMP Kinase, N-terminal domain"/>
    <property type="match status" value="2"/>
</dbReference>
<dbReference type="Gene3D" id="3.30.1370.10">
    <property type="entry name" value="K Homology domain, type 1"/>
    <property type="match status" value="1"/>
</dbReference>
<dbReference type="Gene3D" id="2.40.50.140">
    <property type="entry name" value="Nucleic acid-binding proteins"/>
    <property type="match status" value="1"/>
</dbReference>
<dbReference type="HAMAP" id="MF_01595">
    <property type="entry name" value="PNPase"/>
    <property type="match status" value="1"/>
</dbReference>
<dbReference type="InterPro" id="IPR001247">
    <property type="entry name" value="ExoRNase_PH_dom1"/>
</dbReference>
<dbReference type="InterPro" id="IPR015847">
    <property type="entry name" value="ExoRNase_PH_dom2"/>
</dbReference>
<dbReference type="InterPro" id="IPR036345">
    <property type="entry name" value="ExoRNase_PH_dom2_sf"/>
</dbReference>
<dbReference type="InterPro" id="IPR004087">
    <property type="entry name" value="KH_dom"/>
</dbReference>
<dbReference type="InterPro" id="IPR004088">
    <property type="entry name" value="KH_dom_type_1"/>
</dbReference>
<dbReference type="InterPro" id="IPR036612">
    <property type="entry name" value="KH_dom_type_1_sf"/>
</dbReference>
<dbReference type="InterPro" id="IPR012340">
    <property type="entry name" value="NA-bd_OB-fold"/>
</dbReference>
<dbReference type="InterPro" id="IPR012162">
    <property type="entry name" value="PNPase"/>
</dbReference>
<dbReference type="InterPro" id="IPR027408">
    <property type="entry name" value="PNPase/RNase_PH_dom_sf"/>
</dbReference>
<dbReference type="InterPro" id="IPR015848">
    <property type="entry name" value="PNPase_PH_RNA-bd_bac/org-type"/>
</dbReference>
<dbReference type="InterPro" id="IPR020568">
    <property type="entry name" value="Ribosomal_Su5_D2-typ_SF"/>
</dbReference>
<dbReference type="InterPro" id="IPR003029">
    <property type="entry name" value="S1_domain"/>
</dbReference>
<dbReference type="NCBIfam" id="TIGR03591">
    <property type="entry name" value="polynuc_phos"/>
    <property type="match status" value="1"/>
</dbReference>
<dbReference type="NCBIfam" id="NF008805">
    <property type="entry name" value="PRK11824.1"/>
    <property type="match status" value="1"/>
</dbReference>
<dbReference type="PANTHER" id="PTHR11252">
    <property type="entry name" value="POLYRIBONUCLEOTIDE NUCLEOTIDYLTRANSFERASE"/>
    <property type="match status" value="1"/>
</dbReference>
<dbReference type="PANTHER" id="PTHR11252:SF0">
    <property type="entry name" value="POLYRIBONUCLEOTIDE NUCLEOTIDYLTRANSFERASE 1, MITOCHONDRIAL"/>
    <property type="match status" value="1"/>
</dbReference>
<dbReference type="Pfam" id="PF00013">
    <property type="entry name" value="KH_1"/>
    <property type="match status" value="1"/>
</dbReference>
<dbReference type="Pfam" id="PF03726">
    <property type="entry name" value="PNPase"/>
    <property type="match status" value="1"/>
</dbReference>
<dbReference type="Pfam" id="PF01138">
    <property type="entry name" value="RNase_PH"/>
    <property type="match status" value="2"/>
</dbReference>
<dbReference type="Pfam" id="PF03725">
    <property type="entry name" value="RNase_PH_C"/>
    <property type="match status" value="2"/>
</dbReference>
<dbReference type="Pfam" id="PF00575">
    <property type="entry name" value="S1"/>
    <property type="match status" value="1"/>
</dbReference>
<dbReference type="PIRSF" id="PIRSF005499">
    <property type="entry name" value="PNPase"/>
    <property type="match status" value="1"/>
</dbReference>
<dbReference type="SMART" id="SM00322">
    <property type="entry name" value="KH"/>
    <property type="match status" value="1"/>
</dbReference>
<dbReference type="SMART" id="SM00316">
    <property type="entry name" value="S1"/>
    <property type="match status" value="1"/>
</dbReference>
<dbReference type="SUPFAM" id="SSF54791">
    <property type="entry name" value="Eukaryotic type KH-domain (KH-domain type I)"/>
    <property type="match status" value="1"/>
</dbReference>
<dbReference type="SUPFAM" id="SSF50249">
    <property type="entry name" value="Nucleic acid-binding proteins"/>
    <property type="match status" value="1"/>
</dbReference>
<dbReference type="SUPFAM" id="SSF55666">
    <property type="entry name" value="Ribonuclease PH domain 2-like"/>
    <property type="match status" value="2"/>
</dbReference>
<dbReference type="SUPFAM" id="SSF54211">
    <property type="entry name" value="Ribosomal protein S5 domain 2-like"/>
    <property type="match status" value="2"/>
</dbReference>
<dbReference type="PROSITE" id="PS50084">
    <property type="entry name" value="KH_TYPE_1"/>
    <property type="match status" value="1"/>
</dbReference>
<dbReference type="PROSITE" id="PS50126">
    <property type="entry name" value="S1"/>
    <property type="match status" value="1"/>
</dbReference>